<feature type="chain" id="PRO_1000149504" description="2,3-bisphosphoglycerate-dependent phosphoglycerate mutase">
    <location>
        <begin position="1"/>
        <end position="248"/>
    </location>
</feature>
<feature type="active site" description="Tele-phosphohistidine intermediate" evidence="1">
    <location>
        <position position="9"/>
    </location>
</feature>
<feature type="active site" description="Proton donor/acceptor" evidence="1">
    <location>
        <position position="87"/>
    </location>
</feature>
<feature type="binding site" evidence="1">
    <location>
        <begin position="8"/>
        <end position="15"/>
    </location>
    <ligand>
        <name>substrate</name>
    </ligand>
</feature>
<feature type="binding site" evidence="1">
    <location>
        <begin position="21"/>
        <end position="22"/>
    </location>
    <ligand>
        <name>substrate</name>
    </ligand>
</feature>
<feature type="binding site" evidence="1">
    <location>
        <position position="60"/>
    </location>
    <ligand>
        <name>substrate</name>
    </ligand>
</feature>
<feature type="binding site" evidence="1">
    <location>
        <begin position="87"/>
        <end position="90"/>
    </location>
    <ligand>
        <name>substrate</name>
    </ligand>
</feature>
<feature type="binding site" evidence="1">
    <location>
        <position position="98"/>
    </location>
    <ligand>
        <name>substrate</name>
    </ligand>
</feature>
<feature type="binding site" evidence="1">
    <location>
        <begin position="114"/>
        <end position="115"/>
    </location>
    <ligand>
        <name>substrate</name>
    </ligand>
</feature>
<feature type="binding site" evidence="1">
    <location>
        <begin position="183"/>
        <end position="184"/>
    </location>
    <ligand>
        <name>substrate</name>
    </ligand>
</feature>
<feature type="site" description="Transition state stabilizer" evidence="1">
    <location>
        <position position="182"/>
    </location>
</feature>
<dbReference type="EC" id="5.4.2.11" evidence="1"/>
<dbReference type="EMBL" id="CP000049">
    <property type="protein sequence ID" value="AAX17975.1"/>
    <property type="molecule type" value="Genomic_DNA"/>
</dbReference>
<dbReference type="RefSeq" id="WP_011772593.1">
    <property type="nucleotide sequence ID" value="NZ_CP073176.1"/>
</dbReference>
<dbReference type="SMR" id="A1R083"/>
<dbReference type="KEGG" id="btu:BT0658"/>
<dbReference type="eggNOG" id="COG0588">
    <property type="taxonomic scope" value="Bacteria"/>
</dbReference>
<dbReference type="HOGENOM" id="CLU_033323_1_1_12"/>
<dbReference type="UniPathway" id="UPA00109">
    <property type="reaction ID" value="UER00186"/>
</dbReference>
<dbReference type="Proteomes" id="UP000001205">
    <property type="component" value="Chromosome"/>
</dbReference>
<dbReference type="GO" id="GO:0004619">
    <property type="term" value="F:phosphoglycerate mutase activity"/>
    <property type="evidence" value="ECO:0007669"/>
    <property type="project" value="UniProtKB-EC"/>
</dbReference>
<dbReference type="GO" id="GO:0006094">
    <property type="term" value="P:gluconeogenesis"/>
    <property type="evidence" value="ECO:0007669"/>
    <property type="project" value="UniProtKB-UniRule"/>
</dbReference>
<dbReference type="GO" id="GO:0006096">
    <property type="term" value="P:glycolytic process"/>
    <property type="evidence" value="ECO:0007669"/>
    <property type="project" value="UniProtKB-UniRule"/>
</dbReference>
<dbReference type="CDD" id="cd07067">
    <property type="entry name" value="HP_PGM_like"/>
    <property type="match status" value="1"/>
</dbReference>
<dbReference type="FunFam" id="3.40.50.1240:FF:000003">
    <property type="entry name" value="2,3-bisphosphoglycerate-dependent phosphoglycerate mutase"/>
    <property type="match status" value="1"/>
</dbReference>
<dbReference type="Gene3D" id="3.40.50.1240">
    <property type="entry name" value="Phosphoglycerate mutase-like"/>
    <property type="match status" value="1"/>
</dbReference>
<dbReference type="HAMAP" id="MF_01039">
    <property type="entry name" value="PGAM_GpmA"/>
    <property type="match status" value="1"/>
</dbReference>
<dbReference type="InterPro" id="IPR013078">
    <property type="entry name" value="His_Pase_superF_clade-1"/>
</dbReference>
<dbReference type="InterPro" id="IPR029033">
    <property type="entry name" value="His_PPase_superfam"/>
</dbReference>
<dbReference type="InterPro" id="IPR001345">
    <property type="entry name" value="PG/BPGM_mutase_AS"/>
</dbReference>
<dbReference type="InterPro" id="IPR005952">
    <property type="entry name" value="Phosphogly_mut1"/>
</dbReference>
<dbReference type="NCBIfam" id="TIGR01258">
    <property type="entry name" value="pgm_1"/>
    <property type="match status" value="1"/>
</dbReference>
<dbReference type="NCBIfam" id="NF010713">
    <property type="entry name" value="PRK14115.1"/>
    <property type="match status" value="1"/>
</dbReference>
<dbReference type="PANTHER" id="PTHR11931">
    <property type="entry name" value="PHOSPHOGLYCERATE MUTASE"/>
    <property type="match status" value="1"/>
</dbReference>
<dbReference type="Pfam" id="PF00300">
    <property type="entry name" value="His_Phos_1"/>
    <property type="match status" value="2"/>
</dbReference>
<dbReference type="PIRSF" id="PIRSF000709">
    <property type="entry name" value="6PFK_2-Ptase"/>
    <property type="match status" value="1"/>
</dbReference>
<dbReference type="SMART" id="SM00855">
    <property type="entry name" value="PGAM"/>
    <property type="match status" value="1"/>
</dbReference>
<dbReference type="SUPFAM" id="SSF53254">
    <property type="entry name" value="Phosphoglycerate mutase-like"/>
    <property type="match status" value="1"/>
</dbReference>
<dbReference type="PROSITE" id="PS00175">
    <property type="entry name" value="PG_MUTASE"/>
    <property type="match status" value="1"/>
</dbReference>
<organism>
    <name type="scientific">Borrelia turicatae (strain 91E135)</name>
    <dbReference type="NCBI Taxonomy" id="314724"/>
    <lineage>
        <taxon>Bacteria</taxon>
        <taxon>Pseudomonadati</taxon>
        <taxon>Spirochaetota</taxon>
        <taxon>Spirochaetia</taxon>
        <taxon>Spirochaetales</taxon>
        <taxon>Borreliaceae</taxon>
        <taxon>Borrelia</taxon>
    </lineage>
</organism>
<keyword id="KW-0312">Gluconeogenesis</keyword>
<keyword id="KW-0324">Glycolysis</keyword>
<keyword id="KW-0413">Isomerase</keyword>
<keyword id="KW-1185">Reference proteome</keyword>
<evidence type="ECO:0000255" key="1">
    <source>
        <dbReference type="HAMAP-Rule" id="MF_01039"/>
    </source>
</evidence>
<comment type="function">
    <text evidence="1">Catalyzes the interconversion of 2-phosphoglycerate and 3-phosphoglycerate.</text>
</comment>
<comment type="catalytic activity">
    <reaction evidence="1">
        <text>(2R)-2-phosphoglycerate = (2R)-3-phosphoglycerate</text>
        <dbReference type="Rhea" id="RHEA:15901"/>
        <dbReference type="ChEBI" id="CHEBI:58272"/>
        <dbReference type="ChEBI" id="CHEBI:58289"/>
        <dbReference type="EC" id="5.4.2.11"/>
    </reaction>
</comment>
<comment type="pathway">
    <text evidence="1">Carbohydrate degradation; glycolysis; pyruvate from D-glyceraldehyde 3-phosphate: step 3/5.</text>
</comment>
<comment type="similarity">
    <text evidence="1">Belongs to the phosphoglycerate mutase family. BPG-dependent PGAM subfamily.</text>
</comment>
<proteinExistence type="inferred from homology"/>
<protein>
    <recommendedName>
        <fullName evidence="1">2,3-bisphosphoglycerate-dependent phosphoglycerate mutase</fullName>
        <shortName evidence="1">BPG-dependent PGAM</shortName>
        <shortName evidence="1">PGAM</shortName>
        <shortName evidence="1">Phosphoglyceromutase</shortName>
        <shortName evidence="1">dPGM</shortName>
        <ecNumber evidence="1">5.4.2.11</ecNumber>
    </recommendedName>
</protein>
<name>GPMA_BORT9</name>
<accession>A1R083</accession>
<gene>
    <name evidence="1" type="primary">gpmA</name>
    <name type="ordered locus">BT0658</name>
</gene>
<reference key="1">
    <citation type="submission" date="2004-12" db="EMBL/GenBank/DDBJ databases">
        <title>The genome sequence of Borrelia hermsii and Borrelia turicatae: comparative analysis of two agents of endemic N. America relapsing fever.</title>
        <authorList>
            <person name="Porcella S.F."/>
            <person name="Raffel S.J."/>
            <person name="Schrumpf M.E."/>
            <person name="Montgomery B."/>
            <person name="Smith T."/>
            <person name="Schwan T.G."/>
        </authorList>
    </citation>
    <scope>NUCLEOTIDE SEQUENCE [LARGE SCALE GENOMIC DNA]</scope>
    <source>
        <strain>91E135</strain>
    </source>
</reference>
<sequence length="248" mass="28473">MYKLVLVRHGESEWNKENLFTGWTDVKLSEKGISEALEGGRVLKQEGYSFDIAFSSVLVRANDTLNIILRELGQSYIDVEKSWRLNERHYGALQGLNKAETAEKYGEDKVLMWRRSYDIPPMPLEESDKRHPIHDLRYRGIPKSELPSTECLKDTVARVIPYWTDKIARAIIEGKKVIIAAHGNSLRALVKYLDNMSDDDILKLNIPTGIPLVYELDRDLRPIKHYYLGDEDKIKAAMESVANQGKKK</sequence>